<sequence length="574" mass="62663">MNYGNSSTRSLPSDRSAKLEEMRKIAGADPATIRSQIIASGASTSNQAASLLANSAFNYPSVTTSSDTSFTCTVTTSQASCASTSTYTVAARVGPNICSTTPVGNNSVSDTMAQMAGKAARKGKCSFQAPGLSSSKKRKVVVNACQTIRKVKMQATDLRKATPKVATASATATTMSNNRFAALALEADNVMEQDLAENCSNGEEDVPVVNMNRQSTNGPSKPPAICVPNVDNPHSLEQALNSCVGDNSYSIRTSKFGVSRIYTINADAFRAVVKHLTSLNCQFWHHQLREDKPYTVAVKGMHANVPKAQIEHAFADHGFEALNIYCPRKADWRNAQVSEDDDEATVNFKTRQNMFFVNLKQGPKIAEALKITQLGRYRVTVERAPRRREVLQCLRCHIFGHSKNYCVRDPICAKCAGSHMTGSLLCTSDICMCVNCGGDHASTDKDCPVRIEKLRKMKPSPRLPVPDNATNNKHNRASSARGFIPAEAVRGNMSYADIVRPKGSQFRATATINSQHESNPLHDLGSGNKFLTLEKSIREINGRMDQLFKLVQETVEANKAFRELVQVLISRMPK</sequence>
<evidence type="ECO:0000255" key="1"/>
<reference key="1">
    <citation type="journal article" date="1990" name="Proc. Natl. Acad. Sci. U.S.A.">
        <title>Evidence for horizontal transmission of the mobile element jockey between distant Drosophila species.</title>
        <authorList>
            <person name="Mizrokhi L.J."/>
            <person name="Mazo A.M."/>
        </authorList>
    </citation>
    <scope>NUCLEOTIDE SEQUENCE [GENOMIC DNA]</scope>
    <source>
        <strain>1911.1</strain>
    </source>
</reference>
<gene>
    <name type="primary">gag</name>
</gene>
<dbReference type="EMBL" id="M38437">
    <property type="protein sequence ID" value="AAA28648.1"/>
    <property type="molecule type" value="Genomic_DNA"/>
</dbReference>
<dbReference type="SMR" id="P21331"/>
<dbReference type="FlyBase" id="FBgn0019259">
    <property type="gene designation" value="Dfun\jockey\gag"/>
</dbReference>
<dbReference type="GO" id="GO:0008270">
    <property type="term" value="F:zinc ion binding"/>
    <property type="evidence" value="ECO:0007669"/>
    <property type="project" value="UniProtKB-KW"/>
</dbReference>
<dbReference type="InterPro" id="IPR006579">
    <property type="entry name" value="Pre_C2HC_dom"/>
</dbReference>
<dbReference type="Pfam" id="PF07530">
    <property type="entry name" value="PRE_C2HC"/>
    <property type="match status" value="1"/>
</dbReference>
<dbReference type="SMART" id="SM00596">
    <property type="entry name" value="PRE_C2HC"/>
    <property type="match status" value="1"/>
</dbReference>
<proteinExistence type="predicted"/>
<feature type="chain" id="PRO_0000087421" description="Nucleic-acid-binding protein from mobile element jockey">
    <location>
        <begin position="1"/>
        <end position="574"/>
    </location>
</feature>
<feature type="zinc finger region" evidence="1">
    <location>
        <begin position="393"/>
        <end position="406"/>
    </location>
</feature>
<feature type="zinc finger region" evidence="1">
    <location>
        <begin position="412"/>
        <end position="426"/>
    </location>
</feature>
<feature type="zinc finger region" evidence="1">
    <location>
        <begin position="433"/>
        <end position="447"/>
    </location>
</feature>
<feature type="region of interest" description="Three zinc-finger-like regions">
    <location>
        <begin position="393"/>
        <end position="447"/>
    </location>
</feature>
<accession>P21331</accession>
<protein>
    <recommendedName>
        <fullName>Nucleic-acid-binding protein from mobile element jockey</fullName>
    </recommendedName>
    <alternativeName>
        <fullName>ORF1</fullName>
    </alternativeName>
</protein>
<keyword id="KW-0479">Metal-binding</keyword>
<keyword id="KW-0814">Transposable element</keyword>
<keyword id="KW-0862">Zinc</keyword>
<keyword id="KW-0863">Zinc-finger</keyword>
<name>GAGJ_DROFU</name>
<comment type="function">
    <text>Strongly basic protein that binds directly to retroviral RNA and may be involved in its packaging and in the reverse transcription process.</text>
</comment>
<organism>
    <name type="scientific">Drosophila funebris</name>
    <name type="common">Fruit fly</name>
    <dbReference type="NCBI Taxonomy" id="7221"/>
    <lineage>
        <taxon>Eukaryota</taxon>
        <taxon>Metazoa</taxon>
        <taxon>Ecdysozoa</taxon>
        <taxon>Arthropoda</taxon>
        <taxon>Hexapoda</taxon>
        <taxon>Insecta</taxon>
        <taxon>Pterygota</taxon>
        <taxon>Neoptera</taxon>
        <taxon>Endopterygota</taxon>
        <taxon>Diptera</taxon>
        <taxon>Brachycera</taxon>
        <taxon>Muscomorpha</taxon>
        <taxon>Ephydroidea</taxon>
        <taxon>Drosophilidae</taxon>
        <taxon>Drosophila</taxon>
    </lineage>
</organism>